<name>OXEAS_PYRO7</name>
<dbReference type="EC" id="1.13.11.-" evidence="7"/>
<dbReference type="EC" id="1.13.11.62" evidence="7"/>
<dbReference type="EC" id="1.-.-.-" evidence="7"/>
<dbReference type="EMBL" id="CM001233">
    <property type="protein sequence ID" value="EHA53428.1"/>
    <property type="molecule type" value="Genomic_DNA"/>
</dbReference>
<dbReference type="RefSeq" id="XP_003713235.1">
    <property type="nucleotide sequence ID" value="XM_003713187.1"/>
</dbReference>
<dbReference type="SMR" id="G4N2X9"/>
<dbReference type="STRING" id="242507.G4N2X9"/>
<dbReference type="EnsemblFungi" id="MGG_10859T0">
    <property type="protein sequence ID" value="MGG_10859T0"/>
    <property type="gene ID" value="MGG_10859"/>
</dbReference>
<dbReference type="GeneID" id="2676375"/>
<dbReference type="KEGG" id="mgr:MGG_10859"/>
<dbReference type="VEuPathDB" id="FungiDB:MGG_10859"/>
<dbReference type="eggNOG" id="KOG2408">
    <property type="taxonomic scope" value="Eukaryota"/>
</dbReference>
<dbReference type="HOGENOM" id="CLU_002329_1_0_1"/>
<dbReference type="InParanoid" id="G4N2X9"/>
<dbReference type="OMA" id="RHYTIDY"/>
<dbReference type="OrthoDB" id="823504at2759"/>
<dbReference type="PHI-base" id="PHI:5189"/>
<dbReference type="Proteomes" id="UP000009058">
    <property type="component" value="Chromosome 3"/>
</dbReference>
<dbReference type="GO" id="GO:0051213">
    <property type="term" value="F:dioxygenase activity"/>
    <property type="evidence" value="ECO:0007669"/>
    <property type="project" value="UniProtKB-KW"/>
</dbReference>
<dbReference type="GO" id="GO:0020037">
    <property type="term" value="F:heme binding"/>
    <property type="evidence" value="ECO:0007669"/>
    <property type="project" value="InterPro"/>
</dbReference>
<dbReference type="GO" id="GO:0005506">
    <property type="term" value="F:iron ion binding"/>
    <property type="evidence" value="ECO:0007669"/>
    <property type="project" value="InterPro"/>
</dbReference>
<dbReference type="GO" id="GO:0004497">
    <property type="term" value="F:monooxygenase activity"/>
    <property type="evidence" value="ECO:0007669"/>
    <property type="project" value="InterPro"/>
</dbReference>
<dbReference type="GO" id="GO:0016705">
    <property type="term" value="F:oxidoreductase activity, acting on paired donors, with incorporation or reduction of molecular oxygen"/>
    <property type="evidence" value="ECO:0007669"/>
    <property type="project" value="InterPro"/>
</dbReference>
<dbReference type="GO" id="GO:0004601">
    <property type="term" value="F:peroxidase activity"/>
    <property type="evidence" value="ECO:0007669"/>
    <property type="project" value="UniProtKB-KW"/>
</dbReference>
<dbReference type="GO" id="GO:0006631">
    <property type="term" value="P:fatty acid metabolic process"/>
    <property type="evidence" value="ECO:0007669"/>
    <property type="project" value="UniProtKB-ARBA"/>
</dbReference>
<dbReference type="GO" id="GO:0006979">
    <property type="term" value="P:response to oxidative stress"/>
    <property type="evidence" value="ECO:0007669"/>
    <property type="project" value="InterPro"/>
</dbReference>
<dbReference type="CDD" id="cd20612">
    <property type="entry name" value="CYP_LDS-like_C"/>
    <property type="match status" value="1"/>
</dbReference>
<dbReference type="CDD" id="cd09817">
    <property type="entry name" value="linoleate_diol_synthase_like"/>
    <property type="match status" value="1"/>
</dbReference>
<dbReference type="Gene3D" id="1.10.630.10">
    <property type="entry name" value="Cytochrome P450"/>
    <property type="match status" value="2"/>
</dbReference>
<dbReference type="Gene3D" id="1.10.640.10">
    <property type="entry name" value="Haem peroxidase domain superfamily, animal type"/>
    <property type="match status" value="1"/>
</dbReference>
<dbReference type="InterPro" id="IPR001128">
    <property type="entry name" value="Cyt_P450"/>
</dbReference>
<dbReference type="InterPro" id="IPR036396">
    <property type="entry name" value="Cyt_P450_sf"/>
</dbReference>
<dbReference type="InterPro" id="IPR019791">
    <property type="entry name" value="Haem_peroxidase_animal"/>
</dbReference>
<dbReference type="InterPro" id="IPR010255">
    <property type="entry name" value="Haem_peroxidase_sf"/>
</dbReference>
<dbReference type="InterPro" id="IPR037120">
    <property type="entry name" value="Haem_peroxidase_sf_animal"/>
</dbReference>
<dbReference type="InterPro" id="IPR050783">
    <property type="entry name" value="Oxylipin_biosynth_metab"/>
</dbReference>
<dbReference type="InterPro" id="IPR034812">
    <property type="entry name" value="Ppo-like_N"/>
</dbReference>
<dbReference type="PANTHER" id="PTHR11903:SF13">
    <property type="entry name" value="LINOLEATE 10R-LIPOXYGENASE"/>
    <property type="match status" value="1"/>
</dbReference>
<dbReference type="PANTHER" id="PTHR11903">
    <property type="entry name" value="PROSTAGLANDIN G/H SYNTHASE"/>
    <property type="match status" value="1"/>
</dbReference>
<dbReference type="Pfam" id="PF03098">
    <property type="entry name" value="An_peroxidase"/>
    <property type="match status" value="2"/>
</dbReference>
<dbReference type="Pfam" id="PF00067">
    <property type="entry name" value="p450"/>
    <property type="match status" value="1"/>
</dbReference>
<dbReference type="SUPFAM" id="SSF48264">
    <property type="entry name" value="Cytochrome P450"/>
    <property type="match status" value="1"/>
</dbReference>
<dbReference type="SUPFAM" id="SSF48113">
    <property type="entry name" value="Heme-dependent peroxidases"/>
    <property type="match status" value="1"/>
</dbReference>
<dbReference type="PROSITE" id="PS50292">
    <property type="entry name" value="PEROXIDASE_3"/>
    <property type="match status" value="1"/>
</dbReference>
<evidence type="ECO:0000250" key="1">
    <source>
        <dbReference type="UniProtKB" id="P04798"/>
    </source>
</evidence>
<evidence type="ECO:0000250" key="2">
    <source>
        <dbReference type="UniProtKB" id="Q9UUS2"/>
    </source>
</evidence>
<evidence type="ECO:0000255" key="3"/>
<evidence type="ECO:0000255" key="4">
    <source>
        <dbReference type="PROSITE-ProRule" id="PRU00298"/>
    </source>
</evidence>
<evidence type="ECO:0000256" key="5">
    <source>
        <dbReference type="SAM" id="MobiDB-lite"/>
    </source>
</evidence>
<evidence type="ECO:0000269" key="6">
    <source>
    </source>
</evidence>
<evidence type="ECO:0000269" key="7">
    <source>
    </source>
</evidence>
<evidence type="ECO:0000303" key="8">
    <source>
    </source>
</evidence>
<evidence type="ECO:0000305" key="9"/>
<feature type="chain" id="PRO_0000458150" description="Bifunctional dioxygenase (DOX)-epoxy alcohol synthase (EAS)">
    <location>
        <begin position="1"/>
        <end position="1153"/>
    </location>
</feature>
<feature type="region of interest" description="Disordered" evidence="5">
    <location>
        <begin position="46"/>
        <end position="113"/>
    </location>
</feature>
<feature type="region of interest" description="Fatty acid alpha-dioxygenase" evidence="8">
    <location>
        <begin position="177"/>
        <end position="525"/>
    </location>
</feature>
<feature type="region of interest" description="Epoxy alcohol synthase" evidence="8">
    <location>
        <begin position="732"/>
        <end position="1153"/>
    </location>
</feature>
<feature type="compositionally biased region" description="Low complexity" evidence="5">
    <location>
        <begin position="46"/>
        <end position="56"/>
    </location>
</feature>
<feature type="compositionally biased region" description="Polar residues" evidence="5">
    <location>
        <begin position="57"/>
        <end position="74"/>
    </location>
</feature>
<feature type="compositionally biased region" description="Basic and acidic residues" evidence="5">
    <location>
        <begin position="81"/>
        <end position="98"/>
    </location>
</feature>
<feature type="active site" evidence="3">
    <location>
        <position position="454"/>
    </location>
</feature>
<feature type="binding site" description="axial binding residue" evidence="4">
    <location>
        <position position="276"/>
    </location>
    <ligand>
        <name>heme b</name>
        <dbReference type="ChEBI" id="CHEBI:60344"/>
    </ligand>
    <ligandPart>
        <name>Fe</name>
        <dbReference type="ChEBI" id="CHEBI:18248"/>
    </ligandPart>
</feature>
<feature type="binding site" description="axial binding residue" evidence="4">
    <location>
        <position position="457"/>
    </location>
    <ligand>
        <name>heme b</name>
        <dbReference type="ChEBI" id="CHEBI:60344"/>
    </ligand>
    <ligandPart>
        <name>Fe</name>
        <dbReference type="ChEBI" id="CHEBI:18248"/>
    </ligandPart>
</feature>
<feature type="binding site" description="axial binding residue" evidence="1">
    <location>
        <position position="1086"/>
    </location>
    <ligand>
        <name>heme</name>
        <dbReference type="ChEBI" id="CHEBI:30413"/>
    </ligand>
    <ligandPart>
        <name>Fe</name>
        <dbReference type="ChEBI" id="CHEBI:18248"/>
    </ligandPart>
</feature>
<feature type="mutagenesis site" description="Fully supports the oxidation of linoleic acid (18:2n-6) by the DOX activity, but strongly impairs the production of the epoxy alcohol." evidence="7">
    <original>N</original>
    <variation>V</variation>
    <location>
        <position position="965"/>
    </location>
</feature>
<feature type="mutagenesis site" description="Fully supports the oxidation of linoleic acid (18:2n-6) by the DOX activity, but strongly impairs the production of the epoxy alcohol." evidence="7">
    <original>C</original>
    <variation>S</variation>
    <location>
        <position position="1086"/>
    </location>
</feature>
<reference key="1">
    <citation type="journal article" date="2005" name="Nature">
        <title>The genome sequence of the rice blast fungus Magnaporthe grisea.</title>
        <authorList>
            <person name="Dean R.A."/>
            <person name="Talbot N.J."/>
            <person name="Ebbole D.J."/>
            <person name="Farman M.L."/>
            <person name="Mitchell T.K."/>
            <person name="Orbach M.J."/>
            <person name="Thon M.R."/>
            <person name="Kulkarni R."/>
            <person name="Xu J.-R."/>
            <person name="Pan H."/>
            <person name="Read N.D."/>
            <person name="Lee Y.-H."/>
            <person name="Carbone I."/>
            <person name="Brown D."/>
            <person name="Oh Y.Y."/>
            <person name="Donofrio N."/>
            <person name="Jeong J.S."/>
            <person name="Soanes D.M."/>
            <person name="Djonovic S."/>
            <person name="Kolomiets E."/>
            <person name="Rehmeyer C."/>
            <person name="Li W."/>
            <person name="Harding M."/>
            <person name="Kim S."/>
            <person name="Lebrun M.-H."/>
            <person name="Bohnert H."/>
            <person name="Coughlan S."/>
            <person name="Butler J."/>
            <person name="Calvo S.E."/>
            <person name="Ma L.-J."/>
            <person name="Nicol R."/>
            <person name="Purcell S."/>
            <person name="Nusbaum C."/>
            <person name="Galagan J.E."/>
            <person name="Birren B.W."/>
        </authorList>
    </citation>
    <scope>NUCLEOTIDE SEQUENCE [LARGE SCALE GENOMIC DNA]</scope>
    <source>
        <strain>70-15 / ATCC MYA-4617 / FGSC 8958</strain>
    </source>
</reference>
<reference key="2">
    <citation type="journal article" date="2012" name="PLoS Pathog.">
        <title>Genome-wide transcriptional profiling of appressorium development by the rice blast fungus Magnaporthe oryzae.</title>
        <authorList>
            <person name="Soanes D.M."/>
            <person name="Chakrabarti A."/>
            <person name="Paszkiewicz K.H."/>
            <person name="Dawe A.L."/>
            <person name="Talbot N.J."/>
        </authorList>
    </citation>
    <scope>INDUCTION</scope>
</reference>
<reference key="3">
    <citation type="journal article" date="2014" name="J. Lipid Res.">
        <title>Epoxy alcohol synthase of the rice blast fungus represents a novel subfamily of dioxygenase-cytochrome P450 fusion enzymes.</title>
        <authorList>
            <person name="Hoffmann I."/>
            <person name="Jerneren F."/>
            <person name="Oliw E.H."/>
        </authorList>
    </citation>
    <scope>FUNCTION</scope>
    <scope>DOMAIN</scope>
    <scope>CATALYTIC ACTIVITY</scope>
    <scope>MUTAGENESIS OF ASN-965 AND CYS-1086</scope>
</reference>
<organism>
    <name type="scientific">Pyricularia oryzae (strain 70-15 / ATCC MYA-4617 / FGSC 8958)</name>
    <name type="common">Rice blast fungus</name>
    <name type="synonym">Magnaporthe oryzae</name>
    <dbReference type="NCBI Taxonomy" id="242507"/>
    <lineage>
        <taxon>Eukaryota</taxon>
        <taxon>Fungi</taxon>
        <taxon>Dikarya</taxon>
        <taxon>Ascomycota</taxon>
        <taxon>Pezizomycotina</taxon>
        <taxon>Sordariomycetes</taxon>
        <taxon>Sordariomycetidae</taxon>
        <taxon>Magnaporthales</taxon>
        <taxon>Pyriculariaceae</taxon>
        <taxon>Pyricularia</taxon>
    </lineage>
</organism>
<protein>
    <recommendedName>
        <fullName evidence="8">Bifunctional dioxygenase (DOX)-epoxy alcohol synthase (EAS)</fullName>
        <shortName evidence="8">10R-DOX-EAS</shortName>
    </recommendedName>
    <domain>
        <recommendedName>
            <fullName evidence="8">Fatty acid alpha-dioxygenase</fullName>
            <shortName evidence="8">DOX</shortName>
            <ecNumber evidence="7">1.13.11.-</ecNumber>
            <ecNumber evidence="7">1.13.11.62</ecNumber>
        </recommendedName>
    </domain>
    <domain>
        <recommendedName>
            <fullName evidence="8">Epoxy alcohol synthase</fullName>
            <shortName evidence="8">EAS</shortName>
            <ecNumber evidence="7">1.-.-.-</ecNumber>
        </recommendedName>
        <alternativeName>
            <fullName evidence="8">Cytochrome P450 monooxygenase</fullName>
            <shortName evidence="8">CYP</shortName>
        </alternativeName>
    </domain>
</protein>
<accession>G4N2X9</accession>
<gene>
    <name type="ORF">MGG_10859</name>
</gene>
<sequence length="1153" mass="129584">MDGAVRLDWTGLDLTGHEIHDGVPIASRVQVMVSFPLFKDQHIIMSSKESPSRKSSTIGQSTRNGSCQADTQKGQLPPVGEKPKPVKENPMKKLKEMSQRPLPTQHGDGTYPTEKKLTGIGEDLKHIRGYDVKTLLAMVKSKLKGEKLKDDKTMLMERVMQLVARLPTESKKRAELTDSLINELWESLDHPPLNYLGPEHSYRTPDGSYNHPFNPQLGAAGSRYARSVIPTVTPPGALPDPGLIFDSIMGRTPNSYRKHPNNVSSILWYWATIIIHDIFWTDPRDINTNKSSSYLDLAPLYGNSQEMQDSIRTFKDGRMKPDCYADKRLAGMPPGVSVLLIMFNRFHNHVAENLALINEGGRFNKPSDLLEGEAREAAWKKYDNDLFQVARLVTSGLYINITLVDYVRNIVNLNRVDTTWTLDPRQDAGAHVGTADGAERGTGNAVSAEFNLCYRWHSCISEKDSKFVEAQFQNIFGKPASEVRPDEMWKGFAKMEQNTPADPGQRTFGGFKRGPDGKFDDDDLVRCISEAVEDVAGAFGARNVPQAMKVVETMGIIQGRKWNVAGLNEFRKHFHLKPYSTFEDINSDPGVAEALRRLYDHPDNVELYPGLVAEEDKQPMVPGVGIAPTYTISRVVLSDAVCLVRGDRFYTTDFTPRNLTNWGYKEVDYDLSVNHGCVFYKLFIRAFPNHFKQNSVYAHYPMVVPSENKRILEALGRADLFDFEAPKYIPPRVNITSYGGAEYILETQEKYKVTWHEGLGFLMGEGGLKFMLSGDDPLHAQQRKCMAAQLYKDGWTEAVKAFYAGMMEELLVSKSYFLGNNKHRHVDIIRDVGNMVHVHFASQVFGLPLKTAKNPTGVFTEQEMYGILAAIFTTIFFDLDPSKSFPLRTKTREVCQKLAKLVEANVKLINKIPWSRGMFVGKPAKDEPLSIYGKTMIKGLKAHGLSDYDIAWSHVVPTSGAMVPNQAQVFAQAVDYYLSPAGMHYIPEIHMVALQPSTPETDALLLGYAMEGIRLAGTFGSYREAAVDDVVKEDNGRQVPVKAGDRVFVSFVDAARDPKHFPDPEVVNPRRPAKKYIHYGVGPHACLGRDASQIAITEMFRCLFRRRNVRRVPGPQGELKKVPRPGGFYVYMREDWGGLFPFPVTMRVMWDDE</sequence>
<proteinExistence type="evidence at protein level"/>
<keyword id="KW-0223">Dioxygenase</keyword>
<keyword id="KW-0349">Heme</keyword>
<keyword id="KW-0408">Iron</keyword>
<keyword id="KW-0479">Metal-binding</keyword>
<keyword id="KW-0560">Oxidoreductase</keyword>
<keyword id="KW-0575">Peroxidase</keyword>
<keyword id="KW-1185">Reference proteome</keyword>
<comment type="function">
    <text evidence="7">Bifunctional dioxygenase (DOX)-epoxy alcohol synthase (EAS) that converts linoleic acid (18:2n-6) sequentially to 10(R)-hydroperoxy-8(E),12(Z)-octadecadienoic acid (10R-HPODE) and 10R-HPODE further to 12 S(13R)-epoxy-10(R)-hydroxy-8(E)-octadecenoic acid as the end product (PubMed:25121983). Oxygenation at C-10 occurs by retention of the pro-R hydrogen of C-8 of 18:2n-6, suggesting antarafacial hydrogen abstraction and oxygenation. The epoxy alcohol is formed from 10R-HPODE, likely by heterolytic cleavage of the dioxygen bond and subsequent intramolecular epoxidation of the 12(Z) double bond (PubMed:25121983). The DOX domain is also able to oxygenate position C-8 of linoleic acid to produce 8(R)-hydroperoxy-8(E),12(Z)-octadecadienoic acid (8R-HPODE) (PubMed:25121983). Moreover, the DOX domain can oxygenate alpha-linolenic acid (18:3n-3) at C-8 or C-10 to produce respectively 8HOTrE and 10HOTrE, oleic acid (18:1n-9) at C-8 or C-10 to produce respectively 8-H(P)OME and 10-H(P)OME (with 8R stereoisomer to over 95%), eicosadienoic acid (20:2n-6) at C-10 or C-12 to produce respectively 10(11)-epoxy-12-hydroxy-14(Z)-eicosenoic acid and 14(15)-epoxy-12-hydroxy-10(E)-eicosenoic acid, as well as eicosatrienoic acid (20:3n-3) at C-10 or C-12 to produce respectively 10(11)-epoxy-12-hydroxy-14(Z),17(Z)-eicosadienoic acid and 14(15)-epoxy-12-hydroxy-14(Z),17(Z)-eicosadienoic acid (PubMed:25121983). On the other side, the enzyme EAS domain can also catalyze the conversion of 10HOTrE into 12(13)-epoxy-10(R)-hydroxy-8(E),15(Z)-octadecadienoic acid, 13-R-HPODE into the stereoisomers of 12(13)-epoxy-11-hydroxy-9(Z)-octadecenoic acids (erythro/threo, 1:4), as well as 13S-HPODE into the stereoisomers of 12(13)-epoxy-11-hydroxy-9(Z)-octadecenoic acids (erythro/threo, 1:4) (EAS activity) (PubMed:25121983). Gamma-linolenic acid (18:3n-6) is not a substrate (PubMed:25121983).</text>
</comment>
<comment type="catalytic activity">
    <reaction evidence="7">
        <text>(9Z)-octadecenoate + O2 = (8R)-hydroperoxy-(9Z)-octadecenoate</text>
        <dbReference type="Rhea" id="RHEA:75655"/>
        <dbReference type="ChEBI" id="CHEBI:15379"/>
        <dbReference type="ChEBI" id="CHEBI:30823"/>
        <dbReference type="ChEBI" id="CHEBI:194403"/>
    </reaction>
    <physiologicalReaction direction="left-to-right" evidence="7">
        <dbReference type="Rhea" id="RHEA:75656"/>
    </physiologicalReaction>
</comment>
<comment type="catalytic activity">
    <reaction evidence="7">
        <text>(9Z)-octadecenoate + O2 = 10-hydroperoxy-(8E)-octadecenoate</text>
        <dbReference type="Rhea" id="RHEA:75635"/>
        <dbReference type="ChEBI" id="CHEBI:15379"/>
        <dbReference type="ChEBI" id="CHEBI:30823"/>
        <dbReference type="ChEBI" id="CHEBI:77755"/>
    </reaction>
    <physiologicalReaction direction="left-to-right" evidence="7">
        <dbReference type="Rhea" id="RHEA:75636"/>
    </physiologicalReaction>
</comment>
<comment type="catalytic activity">
    <reaction evidence="7">
        <text>(9Z,12Z)-octadecadienoate + O2 = (8E,10R,12Z)-10-hydroperoxyoctadeca-8,12-dienoate</text>
        <dbReference type="Rhea" id="RHEA:31695"/>
        <dbReference type="ChEBI" id="CHEBI:15379"/>
        <dbReference type="ChEBI" id="CHEBI:30245"/>
        <dbReference type="ChEBI" id="CHEBI:63324"/>
        <dbReference type="EC" id="1.13.11.62"/>
    </reaction>
    <physiologicalReaction direction="left-to-right" evidence="7">
        <dbReference type="Rhea" id="RHEA:31696"/>
    </physiologicalReaction>
</comment>
<comment type="catalytic activity">
    <reaction evidence="7">
        <text>(9Z,12Z,15Z)-octadecatrienoate + O2 = (10R)-hydroperoxy-(8E,12Z,15Z)-octadecatrienoate</text>
        <dbReference type="Rhea" id="RHEA:75643"/>
        <dbReference type="ChEBI" id="CHEBI:15379"/>
        <dbReference type="ChEBI" id="CHEBI:32387"/>
        <dbReference type="ChEBI" id="CHEBI:194405"/>
    </reaction>
    <physiologicalReaction direction="left-to-right" evidence="7">
        <dbReference type="Rhea" id="RHEA:75644"/>
    </physiologicalReaction>
</comment>
<comment type="catalytic activity">
    <reaction evidence="7">
        <text>(9Z,12Z,15Z)-octadecatrienoate + O2 = (8R)-hydroperoxy-(9Z,12Z,15Z)-octadecatrienoate</text>
        <dbReference type="Rhea" id="RHEA:75647"/>
        <dbReference type="ChEBI" id="CHEBI:15379"/>
        <dbReference type="ChEBI" id="CHEBI:32387"/>
        <dbReference type="ChEBI" id="CHEBI:194406"/>
    </reaction>
    <physiologicalReaction direction="left-to-right" evidence="7">
        <dbReference type="Rhea" id="RHEA:75648"/>
    </physiologicalReaction>
</comment>
<comment type="catalytic activity">
    <reaction evidence="7">
        <text>(11Z,14Z)-eicosadienoate + O2 = 12-hydroperoxy-(10E,14Z)-eicosadienoate</text>
        <dbReference type="Rhea" id="RHEA:75659"/>
        <dbReference type="ChEBI" id="CHEBI:15379"/>
        <dbReference type="ChEBI" id="CHEBI:77220"/>
        <dbReference type="ChEBI" id="CHEBI:194414"/>
    </reaction>
    <physiologicalReaction direction="left-to-right" evidence="7">
        <dbReference type="Rhea" id="RHEA:75660"/>
    </physiologicalReaction>
</comment>
<comment type="catalytic activity">
    <reaction evidence="7">
        <text>(11Z,14Z,17Z)-eicosatrienoate + O2 = 12-hydroperoxy-(10E,14Z,17Z)-eicosatrienoate</text>
        <dbReference type="Rhea" id="RHEA:75667"/>
        <dbReference type="ChEBI" id="CHEBI:15379"/>
        <dbReference type="ChEBI" id="CHEBI:77223"/>
        <dbReference type="ChEBI" id="CHEBI:194415"/>
    </reaction>
    <physiologicalReaction direction="left-to-right" evidence="7">
        <dbReference type="Rhea" id="RHEA:75668"/>
    </physiologicalReaction>
</comment>
<comment type="catalytic activity">
    <reaction evidence="7">
        <text>(12R,13S)-epoxy-(9Z)-octadecenoate + O2 = (12R,13S)-epoxy-(10R)-hydroperoxy-(8E)-octadecenoate</text>
        <dbReference type="Rhea" id="RHEA:75683"/>
        <dbReference type="ChEBI" id="CHEBI:15379"/>
        <dbReference type="ChEBI" id="CHEBI:194416"/>
        <dbReference type="ChEBI" id="CHEBI:194417"/>
    </reaction>
    <physiologicalReaction direction="left-to-right" evidence="7">
        <dbReference type="Rhea" id="RHEA:75684"/>
    </physiologicalReaction>
</comment>
<comment type="catalytic activity">
    <reaction evidence="7">
        <text>(8E,10R,12Z)-10-hydroperoxyoctadeca-8,12-dienoate = (12S,13R)-epoxy-(10R)-hydroxy-(8E)-octadecenoate</text>
        <dbReference type="Rhea" id="RHEA:75639"/>
        <dbReference type="ChEBI" id="CHEBI:63324"/>
        <dbReference type="ChEBI" id="CHEBI:194375"/>
    </reaction>
    <physiologicalReaction direction="left-to-right" evidence="7">
        <dbReference type="Rhea" id="RHEA:75640"/>
    </physiologicalReaction>
</comment>
<comment type="catalytic activity">
    <reaction evidence="7">
        <text>(10R)-hydroperoxy-(8E,12Z,15Z)-octadecatrienoate = 12,13-epoxy-(10R)-hydroxy-(8E,15Z)-octadecadienoate</text>
        <dbReference type="Rhea" id="RHEA:75651"/>
        <dbReference type="ChEBI" id="CHEBI:194405"/>
        <dbReference type="ChEBI" id="CHEBI:194407"/>
    </reaction>
    <physiologicalReaction direction="left-to-right" evidence="7">
        <dbReference type="Rhea" id="RHEA:75652"/>
    </physiologicalReaction>
</comment>
<comment type="catalytic activity">
    <reaction evidence="7">
        <text>12-hydroperoxy-(10E,14Z)-eicosadienoate = 10,11-epoxy-12-hydroxy-(14Z)-eicosenoate</text>
        <dbReference type="Rhea" id="RHEA:75663"/>
        <dbReference type="ChEBI" id="CHEBI:194408"/>
        <dbReference type="ChEBI" id="CHEBI:194414"/>
    </reaction>
    <physiologicalReaction direction="left-to-right" evidence="7">
        <dbReference type="Rhea" id="RHEA:75664"/>
    </physiologicalReaction>
</comment>
<comment type="catalytic activity">
    <reaction evidence="7">
        <text>12-hydroperoxy-(10E,14Z,17Z)-eicosatrienoate = 14,15-epoxy-12-hydroxy-(10E,17Z)-eicosadienoate</text>
        <dbReference type="Rhea" id="RHEA:75671"/>
        <dbReference type="ChEBI" id="CHEBI:194411"/>
        <dbReference type="ChEBI" id="CHEBI:194415"/>
    </reaction>
    <physiologicalReaction direction="left-to-right" evidence="7">
        <dbReference type="Rhea" id="RHEA:75672"/>
    </physiologicalReaction>
</comment>
<comment type="catalytic activity">
    <reaction evidence="7">
        <text>(13R)-hydroperoxy-(9Z,11E)-octadecadienoate = (12R,13R)-epoxy-(11S)-hydroxy-(9Z)-octadecenoate</text>
        <dbReference type="Rhea" id="RHEA:75675"/>
        <dbReference type="ChEBI" id="CHEBI:133985"/>
        <dbReference type="ChEBI" id="CHEBI:194412"/>
    </reaction>
    <physiologicalReaction direction="left-to-right" evidence="7">
        <dbReference type="Rhea" id="RHEA:75676"/>
    </physiologicalReaction>
</comment>
<comment type="catalytic activity">
    <reaction evidence="7">
        <text>(13S)-hydroperoxy-(9Z,11E)-octadecadienoate = (12R,13R)-epoxy-(11S)-hydroxy-(9Z)-octadecenoate</text>
        <dbReference type="Rhea" id="RHEA:75679"/>
        <dbReference type="ChEBI" id="CHEBI:57466"/>
        <dbReference type="ChEBI" id="CHEBI:194412"/>
    </reaction>
    <physiologicalReaction direction="left-to-right" evidence="7">
        <dbReference type="Rhea" id="RHEA:75680"/>
    </physiologicalReaction>
</comment>
<comment type="catalytic activity">
    <reaction evidence="7">
        <text>12-hydroperoxy-(10E,14Z)-eicosadienoate = 14,15-epoxy-12-hydroxy-(10E)-eicosenoate</text>
        <dbReference type="Rhea" id="RHEA:75703"/>
        <dbReference type="ChEBI" id="CHEBI:194409"/>
        <dbReference type="ChEBI" id="CHEBI:194414"/>
    </reaction>
    <physiologicalReaction direction="left-to-right" evidence="7">
        <dbReference type="Rhea" id="RHEA:75704"/>
    </physiologicalReaction>
</comment>
<comment type="catalytic activity">
    <reaction evidence="7">
        <text>12-hydroperoxy-(10E,14Z,17Z)-eicosatrienoate = 10,11-epoxy-12-hydroxy-(14Z,17Z)-eicosadienoate</text>
        <dbReference type="Rhea" id="RHEA:75707"/>
        <dbReference type="ChEBI" id="CHEBI:194410"/>
        <dbReference type="ChEBI" id="CHEBI:194415"/>
    </reaction>
    <physiologicalReaction direction="left-to-right" evidence="7">
        <dbReference type="Rhea" id="RHEA:75708"/>
    </physiologicalReaction>
</comment>
<comment type="cofactor">
    <cofactor evidence="4">
        <name>heme b</name>
        <dbReference type="ChEBI" id="CHEBI:60344"/>
    </cofactor>
</comment>
<comment type="cofactor">
    <cofactor evidence="1">
        <name>heme</name>
        <dbReference type="ChEBI" id="CHEBI:30413"/>
    </cofactor>
</comment>
<comment type="subunit">
    <text evidence="2">Homotetramer.</text>
</comment>
<comment type="induction">
    <text evidence="6">Expression is regulated by the MAP kinase PMK1, which is a key regulator of the infectious process.</text>
</comment>
<comment type="similarity">
    <text evidence="4">In the N-terminal section; belongs to the peroxidase family.</text>
</comment>
<comment type="similarity">
    <text evidence="9">In the C-terminal section; belongs to the cytochrome P450 family.</text>
</comment>